<sequence>MAQRYDEMVHYPGLDGMPLAGFGDAHTGRALQHHSLSQSAPYGSTGAAHRVPMPPGMGSNDGLKREKDEIYGHPLFPLLALVFEKCELATCSPRDNSGSFPGGDVCSSDSFNEDIAVFAKQVRTEKPLFSSNPELDSLMIQAIQVLRFHLLELEKVHDLCDNFCHRYITCLKGKMPIDLVIDDRDGSSKSDLEDFTGSCTSLSDQNNSWIRDHDETGSTHSGTPGPSSGGLASQSGDNSSEQGDCMDNSVASPSTGDDDDLDRDKKRNKKRGIFPKVATNIMRAWLFQHLSHPYPSEEQKKQLAQDTGLTILQVNNWFINARRRIVQPMIDQSNRTGQGGAPYSPDGQNMGGYVMDGQQHMGIRPPGFQGIPGDYTAAPSTMPMGFPPAGYTPAIPPHSAGLRHGPSLHSYLPGHPHHASMILPAGASPHHLVSAQSPADALLNGQNIDIHAH</sequence>
<dbReference type="EMBL" id="BC075589">
    <property type="protein sequence ID" value="AAH75589.1"/>
    <property type="molecule type" value="mRNA"/>
</dbReference>
<dbReference type="EMBL" id="CR760178">
    <property type="protein sequence ID" value="CAJ82625.1"/>
    <property type="molecule type" value="mRNA"/>
</dbReference>
<dbReference type="RefSeq" id="NP_001006782.1">
    <property type="nucleotide sequence ID" value="NM_001006781.1"/>
</dbReference>
<dbReference type="SMR" id="Q6DIF3"/>
<dbReference type="STRING" id="8364.ENSXETP00000018507"/>
<dbReference type="PaxDb" id="8364-ENSXETP00000006113"/>
<dbReference type="DNASU" id="448474"/>
<dbReference type="GeneID" id="448474"/>
<dbReference type="KEGG" id="xtr:448474"/>
<dbReference type="CTD" id="56917"/>
<dbReference type="eggNOG" id="KOG0773">
    <property type="taxonomic scope" value="Eukaryota"/>
</dbReference>
<dbReference type="HOGENOM" id="CLU_023139_1_1_1"/>
<dbReference type="InParanoid" id="Q6DIF3"/>
<dbReference type="OrthoDB" id="10056939at2759"/>
<dbReference type="TreeFam" id="TF318093"/>
<dbReference type="Proteomes" id="UP000008143">
    <property type="component" value="Chromosome 8"/>
</dbReference>
<dbReference type="Bgee" id="ENSXETG00000002807">
    <property type="expression patterns" value="Expressed in neurula embryo and 33 other cell types or tissues"/>
</dbReference>
<dbReference type="ExpressionAtlas" id="Q6DIF3">
    <property type="expression patterns" value="baseline"/>
</dbReference>
<dbReference type="GO" id="GO:0005737">
    <property type="term" value="C:cytoplasm"/>
    <property type="evidence" value="ECO:0000250"/>
    <property type="project" value="UniProtKB"/>
</dbReference>
<dbReference type="GO" id="GO:0005634">
    <property type="term" value="C:nucleus"/>
    <property type="evidence" value="ECO:0000250"/>
    <property type="project" value="UniProtKB"/>
</dbReference>
<dbReference type="GO" id="GO:0003677">
    <property type="term" value="F:DNA binding"/>
    <property type="evidence" value="ECO:0000250"/>
    <property type="project" value="UniProtKB"/>
</dbReference>
<dbReference type="GO" id="GO:0009952">
    <property type="term" value="P:anterior/posterior pattern specification"/>
    <property type="evidence" value="ECO:0000250"/>
    <property type="project" value="UniProtKB"/>
</dbReference>
<dbReference type="GO" id="GO:0030154">
    <property type="term" value="P:cell differentiation"/>
    <property type="evidence" value="ECO:0007669"/>
    <property type="project" value="UniProtKB-KW"/>
</dbReference>
<dbReference type="GO" id="GO:0007417">
    <property type="term" value="P:central nervous system development"/>
    <property type="evidence" value="ECO:0000250"/>
    <property type="project" value="UniProtKB"/>
</dbReference>
<dbReference type="GO" id="GO:0030902">
    <property type="term" value="P:hindbrain development"/>
    <property type="evidence" value="ECO:0000250"/>
    <property type="project" value="UniProtKB"/>
</dbReference>
<dbReference type="GO" id="GO:0045893">
    <property type="term" value="P:positive regulation of DNA-templated transcription"/>
    <property type="evidence" value="ECO:0000250"/>
    <property type="project" value="UniProtKB"/>
</dbReference>
<dbReference type="GO" id="GO:0043410">
    <property type="term" value="P:positive regulation of MAPK cascade"/>
    <property type="evidence" value="ECO:0000250"/>
    <property type="project" value="UniProtKB"/>
</dbReference>
<dbReference type="GO" id="GO:0045944">
    <property type="term" value="P:positive regulation of transcription by RNA polymerase II"/>
    <property type="evidence" value="ECO:0000250"/>
    <property type="project" value="UniProtKB"/>
</dbReference>
<dbReference type="CDD" id="cd00086">
    <property type="entry name" value="homeodomain"/>
    <property type="match status" value="1"/>
</dbReference>
<dbReference type="FunFam" id="1.10.10.60:FF:000004">
    <property type="entry name" value="Meis2 homeobox isoform 2c"/>
    <property type="match status" value="1"/>
</dbReference>
<dbReference type="Gene3D" id="1.10.10.60">
    <property type="entry name" value="Homeodomain-like"/>
    <property type="match status" value="1"/>
</dbReference>
<dbReference type="InterPro" id="IPR001356">
    <property type="entry name" value="HD"/>
</dbReference>
<dbReference type="InterPro" id="IPR009057">
    <property type="entry name" value="Homeodomain-like_sf"/>
</dbReference>
<dbReference type="InterPro" id="IPR008422">
    <property type="entry name" value="KN_HD"/>
</dbReference>
<dbReference type="InterPro" id="IPR032453">
    <property type="entry name" value="PKNOX/Meis_N"/>
</dbReference>
<dbReference type="InterPro" id="IPR050224">
    <property type="entry name" value="TALE_homeobox"/>
</dbReference>
<dbReference type="PANTHER" id="PTHR11850">
    <property type="entry name" value="HOMEOBOX PROTEIN TRANSCRIPTION FACTORS"/>
    <property type="match status" value="1"/>
</dbReference>
<dbReference type="Pfam" id="PF05920">
    <property type="entry name" value="Homeobox_KN"/>
    <property type="match status" value="1"/>
</dbReference>
<dbReference type="Pfam" id="PF16493">
    <property type="entry name" value="Meis_PKNOX_N"/>
    <property type="match status" value="1"/>
</dbReference>
<dbReference type="SMART" id="SM00389">
    <property type="entry name" value="HOX"/>
    <property type="match status" value="1"/>
</dbReference>
<dbReference type="SUPFAM" id="SSF46689">
    <property type="entry name" value="Homeodomain-like"/>
    <property type="match status" value="1"/>
</dbReference>
<dbReference type="PROSITE" id="PS50071">
    <property type="entry name" value="HOMEOBOX_2"/>
    <property type="match status" value="1"/>
</dbReference>
<comment type="function">
    <text evidence="1">A caudalizing protein which is required to pattern the anterior/posterior (A/P) axis during central nervous system (CNS) formation. Inhibits anterior neural expression and acts as a transcriptional activator to induce posterior neural gene expression. Maintains a proper A/P balance required for hindbrain formation by activating the FGF/MAPK pathway, which modulates the planar cell polarity (PCP) pathway. Interacts with retinoid signaling during hindbrain patterning (By similarity).</text>
</comment>
<comment type="subcellular location">
    <subcellularLocation>
        <location evidence="2 5">Nucleus</location>
    </subcellularLocation>
</comment>
<comment type="similarity">
    <text evidence="2">Belongs to the TALE/MEIS homeobox family.</text>
</comment>
<keyword id="KW-0010">Activator</keyword>
<keyword id="KW-0217">Developmental protein</keyword>
<keyword id="KW-0221">Differentiation</keyword>
<keyword id="KW-0238">DNA-binding</keyword>
<keyword id="KW-0371">Homeobox</keyword>
<keyword id="KW-0524">Neurogenesis</keyword>
<keyword id="KW-0539">Nucleus</keyword>
<keyword id="KW-1185">Reference proteome</keyword>
<keyword id="KW-0804">Transcription</keyword>
<keyword id="KW-0805">Transcription regulation</keyword>
<proteinExistence type="evidence at transcript level"/>
<feature type="chain" id="PRO_0000355573" description="Homeobox protein meis3">
    <location>
        <begin position="1"/>
        <end position="453"/>
    </location>
</feature>
<feature type="domain" description="MEIS N-terminal" evidence="2">
    <location>
        <begin position="102"/>
        <end position="185"/>
    </location>
</feature>
<feature type="DNA-binding region" description="Homeobox" evidence="3">
    <location>
        <begin position="267"/>
        <end position="329"/>
    </location>
</feature>
<feature type="region of interest" description="Disordered" evidence="4">
    <location>
        <begin position="33"/>
        <end position="64"/>
    </location>
</feature>
<feature type="region of interest" description="Disordered" evidence="4">
    <location>
        <begin position="192"/>
        <end position="272"/>
    </location>
</feature>
<feature type="compositionally biased region" description="Polar residues" evidence="4">
    <location>
        <begin position="197"/>
        <end position="209"/>
    </location>
</feature>
<feature type="compositionally biased region" description="Low complexity" evidence="4">
    <location>
        <begin position="218"/>
        <end position="230"/>
    </location>
</feature>
<feature type="compositionally biased region" description="Polar residues" evidence="4">
    <location>
        <begin position="231"/>
        <end position="242"/>
    </location>
</feature>
<feature type="sequence conflict" description="In Ref. 1; AAH75589." evidence="5" ref="1">
    <original>A</original>
    <variation>T</variation>
    <location>
        <position position="427"/>
    </location>
</feature>
<organism>
    <name type="scientific">Xenopus tropicalis</name>
    <name type="common">Western clawed frog</name>
    <name type="synonym">Silurana tropicalis</name>
    <dbReference type="NCBI Taxonomy" id="8364"/>
    <lineage>
        <taxon>Eukaryota</taxon>
        <taxon>Metazoa</taxon>
        <taxon>Chordata</taxon>
        <taxon>Craniata</taxon>
        <taxon>Vertebrata</taxon>
        <taxon>Euteleostomi</taxon>
        <taxon>Amphibia</taxon>
        <taxon>Batrachia</taxon>
        <taxon>Anura</taxon>
        <taxon>Pipoidea</taxon>
        <taxon>Pipidae</taxon>
        <taxon>Xenopodinae</taxon>
        <taxon>Xenopus</taxon>
        <taxon>Silurana</taxon>
    </lineage>
</organism>
<accession>Q6DIF3</accession>
<accession>Q28IX3</accession>
<reference evidence="5 6" key="1">
    <citation type="submission" date="2004-06" db="EMBL/GenBank/DDBJ databases">
        <authorList>
            <consortium name="NIH - Xenopus Gene Collection (XGC) project"/>
        </authorList>
    </citation>
    <scope>NUCLEOTIDE SEQUENCE [LARGE SCALE MRNA]</scope>
    <source>
        <tissue evidence="6">Neurula</tissue>
    </source>
</reference>
<reference evidence="5 6" key="2">
    <citation type="submission" date="2006-10" db="EMBL/GenBank/DDBJ databases">
        <authorList>
            <consortium name="Sanger Xenopus tropicalis EST/cDNA project"/>
        </authorList>
    </citation>
    <scope>NUCLEOTIDE SEQUENCE [LARGE SCALE MRNA] OF 7-453</scope>
    <source>
        <tissue evidence="6">Neurula</tissue>
    </source>
</reference>
<gene>
    <name evidence="6" type="primary">meis3</name>
</gene>
<evidence type="ECO:0000250" key="1">
    <source>
        <dbReference type="UniProtKB" id="Q5U4X3"/>
    </source>
</evidence>
<evidence type="ECO:0000255" key="2"/>
<evidence type="ECO:0000255" key="3">
    <source>
        <dbReference type="PROSITE-ProRule" id="PRU00108"/>
    </source>
</evidence>
<evidence type="ECO:0000256" key="4">
    <source>
        <dbReference type="SAM" id="MobiDB-lite"/>
    </source>
</evidence>
<evidence type="ECO:0000305" key="5"/>
<evidence type="ECO:0000312" key="6">
    <source>
        <dbReference type="EMBL" id="AAH75589.1"/>
    </source>
</evidence>
<protein>
    <recommendedName>
        <fullName evidence="6">Homeobox protein meis3</fullName>
    </recommendedName>
</protein>
<name>MEIS3_XENTR</name>